<feature type="chain" id="PRO_0000092717" description="Phosphonates import ATP-binding protein PhnC 2">
    <location>
        <begin position="1"/>
        <end position="254"/>
    </location>
</feature>
<feature type="domain" description="ABC transporter" evidence="1">
    <location>
        <begin position="4"/>
        <end position="248"/>
    </location>
</feature>
<feature type="binding site" evidence="1">
    <location>
        <begin position="37"/>
        <end position="44"/>
    </location>
    <ligand>
        <name>ATP</name>
        <dbReference type="ChEBI" id="CHEBI:30616"/>
    </ligand>
</feature>
<organism>
    <name type="scientific">Oceanobacillus iheyensis (strain DSM 14371 / CIP 107618 / JCM 11309 / KCTC 3954 / HTE831)</name>
    <dbReference type="NCBI Taxonomy" id="221109"/>
    <lineage>
        <taxon>Bacteria</taxon>
        <taxon>Bacillati</taxon>
        <taxon>Bacillota</taxon>
        <taxon>Bacilli</taxon>
        <taxon>Bacillales</taxon>
        <taxon>Bacillaceae</taxon>
        <taxon>Oceanobacillus</taxon>
    </lineage>
</organism>
<proteinExistence type="inferred from homology"/>
<protein>
    <recommendedName>
        <fullName evidence="1">Phosphonates import ATP-binding protein PhnC 2</fullName>
        <ecNumber evidence="1">7.3.2.2</ecNumber>
    </recommendedName>
</protein>
<dbReference type="EC" id="7.3.2.2" evidence="1"/>
<dbReference type="EMBL" id="BA000028">
    <property type="protein sequence ID" value="BAC12933.1"/>
    <property type="molecule type" value="Genomic_DNA"/>
</dbReference>
<dbReference type="RefSeq" id="WP_011065379.1">
    <property type="nucleotide sequence ID" value="NC_004193.1"/>
</dbReference>
<dbReference type="SMR" id="Q8CUY0"/>
<dbReference type="STRING" id="221109.gene:10733215"/>
<dbReference type="KEGG" id="oih:OB0977"/>
<dbReference type="eggNOG" id="COG3638">
    <property type="taxonomic scope" value="Bacteria"/>
</dbReference>
<dbReference type="HOGENOM" id="CLU_000604_1_22_9"/>
<dbReference type="OrthoDB" id="9802264at2"/>
<dbReference type="PhylomeDB" id="Q8CUY0"/>
<dbReference type="Proteomes" id="UP000000822">
    <property type="component" value="Chromosome"/>
</dbReference>
<dbReference type="GO" id="GO:0005886">
    <property type="term" value="C:plasma membrane"/>
    <property type="evidence" value="ECO:0007669"/>
    <property type="project" value="UniProtKB-SubCell"/>
</dbReference>
<dbReference type="GO" id="GO:0015416">
    <property type="term" value="F:ABC-type phosphonate transporter activity"/>
    <property type="evidence" value="ECO:0007669"/>
    <property type="project" value="UniProtKB-EC"/>
</dbReference>
<dbReference type="GO" id="GO:0005524">
    <property type="term" value="F:ATP binding"/>
    <property type="evidence" value="ECO:0007669"/>
    <property type="project" value="UniProtKB-KW"/>
</dbReference>
<dbReference type="GO" id="GO:0016887">
    <property type="term" value="F:ATP hydrolysis activity"/>
    <property type="evidence" value="ECO:0007669"/>
    <property type="project" value="InterPro"/>
</dbReference>
<dbReference type="CDD" id="cd03256">
    <property type="entry name" value="ABC_PhnC_transporter"/>
    <property type="match status" value="1"/>
</dbReference>
<dbReference type="FunFam" id="3.40.50.300:FF:000134">
    <property type="entry name" value="Iron-enterobactin ABC transporter ATP-binding protein"/>
    <property type="match status" value="1"/>
</dbReference>
<dbReference type="Gene3D" id="3.40.50.300">
    <property type="entry name" value="P-loop containing nucleotide triphosphate hydrolases"/>
    <property type="match status" value="1"/>
</dbReference>
<dbReference type="InterPro" id="IPR003593">
    <property type="entry name" value="AAA+_ATPase"/>
</dbReference>
<dbReference type="InterPro" id="IPR003439">
    <property type="entry name" value="ABC_transporter-like_ATP-bd"/>
</dbReference>
<dbReference type="InterPro" id="IPR017871">
    <property type="entry name" value="ABC_transporter-like_CS"/>
</dbReference>
<dbReference type="InterPro" id="IPR012693">
    <property type="entry name" value="ABC_transpr_PhnC"/>
</dbReference>
<dbReference type="InterPro" id="IPR050086">
    <property type="entry name" value="MetN_ABC_transporter-like"/>
</dbReference>
<dbReference type="InterPro" id="IPR027417">
    <property type="entry name" value="P-loop_NTPase"/>
</dbReference>
<dbReference type="NCBIfam" id="TIGR02315">
    <property type="entry name" value="ABC_phnC"/>
    <property type="match status" value="1"/>
</dbReference>
<dbReference type="PANTHER" id="PTHR43166">
    <property type="entry name" value="AMINO ACID IMPORT ATP-BINDING PROTEIN"/>
    <property type="match status" value="1"/>
</dbReference>
<dbReference type="PANTHER" id="PTHR43166:SF6">
    <property type="entry name" value="PHOSPHONATES IMPORT ATP-BINDING PROTEIN PHNC"/>
    <property type="match status" value="1"/>
</dbReference>
<dbReference type="Pfam" id="PF00005">
    <property type="entry name" value="ABC_tran"/>
    <property type="match status" value="1"/>
</dbReference>
<dbReference type="SMART" id="SM00382">
    <property type="entry name" value="AAA"/>
    <property type="match status" value="1"/>
</dbReference>
<dbReference type="SUPFAM" id="SSF52540">
    <property type="entry name" value="P-loop containing nucleoside triphosphate hydrolases"/>
    <property type="match status" value="1"/>
</dbReference>
<dbReference type="PROSITE" id="PS00211">
    <property type="entry name" value="ABC_TRANSPORTER_1"/>
    <property type="match status" value="1"/>
</dbReference>
<dbReference type="PROSITE" id="PS50893">
    <property type="entry name" value="ABC_TRANSPORTER_2"/>
    <property type="match status" value="1"/>
</dbReference>
<dbReference type="PROSITE" id="PS51249">
    <property type="entry name" value="PHNC"/>
    <property type="match status" value="1"/>
</dbReference>
<accession>Q8CUY0</accession>
<reference key="1">
    <citation type="journal article" date="2002" name="Nucleic Acids Res.">
        <title>Genome sequence of Oceanobacillus iheyensis isolated from the Iheya Ridge and its unexpected adaptive capabilities to extreme environments.</title>
        <authorList>
            <person name="Takami H."/>
            <person name="Takaki Y."/>
            <person name="Uchiyama I."/>
        </authorList>
    </citation>
    <scope>NUCLEOTIDE SEQUENCE [LARGE SCALE GENOMIC DNA]</scope>
    <source>
        <strain>DSM 14371 / CIP 107618 / JCM 11309 / KCTC 3954 / HTE831</strain>
    </source>
</reference>
<gene>
    <name evidence="1" type="primary">phnC2</name>
    <name type="ordered locus">OB0977</name>
</gene>
<evidence type="ECO:0000255" key="1">
    <source>
        <dbReference type="HAMAP-Rule" id="MF_01713"/>
    </source>
</evidence>
<name>PHNC2_OCEIH</name>
<sequence length="254" mass="28499">MTLLEVNNLGKHYNGDTKVLKNVNFEIGSGEFVSIIGPSGAGKSTLLRCINRMVEISEGSVFVDGQSVGDMKKKSLRTLRTNIGMIFQHYNLVPRLTVIENVLHGRFGYKTNLQGIFGRFTEKEKEKAFELLDRLGIADHAYKRCDQLSGGQQQRVGICRALIQDPKIILCDEPIASLDPNSSKIIMDYLKRITNELGITCLVNLHQVEVAKEYADRIIGLKSGEIVFDGPSNMLYQDKIESIYGFQQRELITV</sequence>
<comment type="function">
    <text evidence="1">Part of the ABC transporter complex PhnCDE involved in phosphonates import. Responsible for energy coupling to the transport system.</text>
</comment>
<comment type="catalytic activity">
    <reaction evidence="1">
        <text>phosphonate(out) + ATP + H2O = phosphonate(in) + ADP + phosphate + H(+)</text>
        <dbReference type="Rhea" id="RHEA:18065"/>
        <dbReference type="ChEBI" id="CHEBI:15377"/>
        <dbReference type="ChEBI" id="CHEBI:15378"/>
        <dbReference type="ChEBI" id="CHEBI:16215"/>
        <dbReference type="ChEBI" id="CHEBI:30616"/>
        <dbReference type="ChEBI" id="CHEBI:43474"/>
        <dbReference type="ChEBI" id="CHEBI:456216"/>
        <dbReference type="EC" id="7.3.2.2"/>
    </reaction>
</comment>
<comment type="subunit">
    <text evidence="1">The complex is composed of two ATP-binding proteins (PhnC), two transmembrane proteins (PhnE) and a solute-binding protein (PhnD).</text>
</comment>
<comment type="subcellular location">
    <subcellularLocation>
        <location evidence="1">Cell membrane</location>
        <topology evidence="1">Peripheral membrane protein</topology>
    </subcellularLocation>
</comment>
<comment type="similarity">
    <text evidence="1">Belongs to the ABC transporter superfamily. Phosphonates importer (TC 3.A.1.9.1) family.</text>
</comment>
<keyword id="KW-0067">ATP-binding</keyword>
<keyword id="KW-1003">Cell membrane</keyword>
<keyword id="KW-0472">Membrane</keyword>
<keyword id="KW-0547">Nucleotide-binding</keyword>
<keyword id="KW-0918">Phosphonate transport</keyword>
<keyword id="KW-1185">Reference proteome</keyword>
<keyword id="KW-1278">Translocase</keyword>
<keyword id="KW-0813">Transport</keyword>